<keyword id="KW-0175">Coiled coil</keyword>
<keyword id="KW-0963">Cytoplasm</keyword>
<keyword id="KW-1185">Reference proteome</keyword>
<keyword id="KW-0346">Stress response</keyword>
<name>NST1_YARLI</name>
<sequence>MEKAIYSKDGKRVINLKSRETFKTENVSFEWGADDSKPKSKKKKKRKSKGQQVIIDSIDLDERSIVHGVMEAKMKAEKLARLKKSVNDTFPPSPASGLSPSMERQTIKYFWLSLTSEQRRELVQVEKEAVLNKMKRQQKNTCECDICGRKRVAIEQELETLYADYYKELDALAESKDLPLLPLPSMGFFQADDVLRGGHQDGNTTEELSEATNRLSIAPATTATTRPLPQNLGKEIDEEGDTEEDEPYGFEEGEDVQSLDVSSVADDLLTNDGKKFIEMMERLAEKRAGRIEEIRDGEDEEPVVVEDDNDDEEYENDSDYSDYSSEYSQTGESLTADQRMEEGRRMFQIFAARMFEQRVLHAYKQSVAAQVKAELQQMEEEKKTLDLEKEARDQQRRERKKEKKRAQKAIKEEEKRKAAAEREEREKREAEEAERLRLEAERKQQEKEREKAARKAASEAKQKARQEEQARLAREKEEKRLARIREMEERMRLAKEKEEREKEELRARQQQEEDERREKERLEEERIENERLEAERIENERLEKEREQQRLEEEKERQRIKEEREKQKLEEEREKRASMSIPLSKPLPGKTQIPASQPGTSLGGLQQPVPQAAPVAPVAMMPQSPSPQLPPGLTQHVAQSQILLDRLTPDPTSRMTPERHTPSPGSTTSNAKTLLDSLLRPAQGPSTPPPGPGTPRSSISHVAPVGAIGTIGSPGQVNQQPLHVHPGHMNHLSQGPVTPGQVNHPVGNIGHVGNVGTVGSIGLVNPPEQPISQPISPPSTTLPISQHRFDPWNSSYSGIASSSTPGNRLWGSSGEVPGNVIRQAALDAYEELHKNGSIDCNGFVNSRALQNTAQKYSSTGQGFGVSELFKACQGSFDIVGGLMKPRGGL</sequence>
<protein>
    <recommendedName>
        <fullName>Stress response protein NST1</fullName>
    </recommendedName>
</protein>
<proteinExistence type="inferred from homology"/>
<accession>Q6CBW0</accession>
<gene>
    <name type="primary">NST1</name>
    <name type="ordered locus">YALI0C15070g</name>
</gene>
<comment type="function">
    <text evidence="1">May act as a negative regulator of salt tolerance.</text>
</comment>
<comment type="subcellular location">
    <subcellularLocation>
        <location evidence="1">Cytoplasm</location>
    </subcellularLocation>
</comment>
<comment type="similarity">
    <text evidence="4">Belongs to the NST1 family.</text>
</comment>
<organism>
    <name type="scientific">Yarrowia lipolytica (strain CLIB 122 / E 150)</name>
    <name type="common">Yeast</name>
    <name type="synonym">Candida lipolytica</name>
    <dbReference type="NCBI Taxonomy" id="284591"/>
    <lineage>
        <taxon>Eukaryota</taxon>
        <taxon>Fungi</taxon>
        <taxon>Dikarya</taxon>
        <taxon>Ascomycota</taxon>
        <taxon>Saccharomycotina</taxon>
        <taxon>Dipodascomycetes</taxon>
        <taxon>Dipodascales</taxon>
        <taxon>Dipodascales incertae sedis</taxon>
        <taxon>Yarrowia</taxon>
    </lineage>
</organism>
<dbReference type="EMBL" id="CR382129">
    <property type="protein sequence ID" value="CAG82165.1"/>
    <property type="molecule type" value="Genomic_DNA"/>
</dbReference>
<dbReference type="RefSeq" id="XP_501852.1">
    <property type="nucleotide sequence ID" value="XM_501852.1"/>
</dbReference>
<dbReference type="SMR" id="Q6CBW0"/>
<dbReference type="STRING" id="284591.Q6CBW0"/>
<dbReference type="EnsemblFungi" id="CAG82165">
    <property type="protein sequence ID" value="CAG82165"/>
    <property type="gene ID" value="YALI0_C15070g"/>
</dbReference>
<dbReference type="KEGG" id="yli:2909348"/>
<dbReference type="VEuPathDB" id="FungiDB:YALI0_C15070g"/>
<dbReference type="HOGENOM" id="CLU_324715_0_0_1"/>
<dbReference type="InParanoid" id="Q6CBW0"/>
<dbReference type="OrthoDB" id="95895at4891"/>
<dbReference type="Proteomes" id="UP000001300">
    <property type="component" value="Chromosome C"/>
</dbReference>
<dbReference type="GO" id="GO:0005737">
    <property type="term" value="C:cytoplasm"/>
    <property type="evidence" value="ECO:0007669"/>
    <property type="project" value="UniProtKB-SubCell"/>
</dbReference>
<dbReference type="InterPro" id="IPR025279">
    <property type="entry name" value="NST1"/>
</dbReference>
<dbReference type="PANTHER" id="PTHR13142">
    <property type="entry name" value="INNER CENTROMERE PROTEIN"/>
    <property type="match status" value="1"/>
</dbReference>
<dbReference type="PANTHER" id="PTHR13142:SF1">
    <property type="entry name" value="INNER CENTROMERE PROTEIN"/>
    <property type="match status" value="1"/>
</dbReference>
<dbReference type="Pfam" id="PF13945">
    <property type="entry name" value="NST1"/>
    <property type="match status" value="1"/>
</dbReference>
<reference key="1">
    <citation type="journal article" date="2004" name="Nature">
        <title>Genome evolution in yeasts.</title>
        <authorList>
            <person name="Dujon B."/>
            <person name="Sherman D."/>
            <person name="Fischer G."/>
            <person name="Durrens P."/>
            <person name="Casaregola S."/>
            <person name="Lafontaine I."/>
            <person name="de Montigny J."/>
            <person name="Marck C."/>
            <person name="Neuveglise C."/>
            <person name="Talla E."/>
            <person name="Goffard N."/>
            <person name="Frangeul L."/>
            <person name="Aigle M."/>
            <person name="Anthouard V."/>
            <person name="Babour A."/>
            <person name="Barbe V."/>
            <person name="Barnay S."/>
            <person name="Blanchin S."/>
            <person name="Beckerich J.-M."/>
            <person name="Beyne E."/>
            <person name="Bleykasten C."/>
            <person name="Boisrame A."/>
            <person name="Boyer J."/>
            <person name="Cattolico L."/>
            <person name="Confanioleri F."/>
            <person name="de Daruvar A."/>
            <person name="Despons L."/>
            <person name="Fabre E."/>
            <person name="Fairhead C."/>
            <person name="Ferry-Dumazet H."/>
            <person name="Groppi A."/>
            <person name="Hantraye F."/>
            <person name="Hennequin C."/>
            <person name="Jauniaux N."/>
            <person name="Joyet P."/>
            <person name="Kachouri R."/>
            <person name="Kerrest A."/>
            <person name="Koszul R."/>
            <person name="Lemaire M."/>
            <person name="Lesur I."/>
            <person name="Ma L."/>
            <person name="Muller H."/>
            <person name="Nicaud J.-M."/>
            <person name="Nikolski M."/>
            <person name="Oztas S."/>
            <person name="Ozier-Kalogeropoulos O."/>
            <person name="Pellenz S."/>
            <person name="Potier S."/>
            <person name="Richard G.-F."/>
            <person name="Straub M.-L."/>
            <person name="Suleau A."/>
            <person name="Swennen D."/>
            <person name="Tekaia F."/>
            <person name="Wesolowski-Louvel M."/>
            <person name="Westhof E."/>
            <person name="Wirth B."/>
            <person name="Zeniou-Meyer M."/>
            <person name="Zivanovic Y."/>
            <person name="Bolotin-Fukuhara M."/>
            <person name="Thierry A."/>
            <person name="Bouchier C."/>
            <person name="Caudron B."/>
            <person name="Scarpelli C."/>
            <person name="Gaillardin C."/>
            <person name="Weissenbach J."/>
            <person name="Wincker P."/>
            <person name="Souciet J.-L."/>
        </authorList>
    </citation>
    <scope>NUCLEOTIDE SEQUENCE [LARGE SCALE GENOMIC DNA]</scope>
    <source>
        <strain>CLIB 122 / E 150</strain>
    </source>
</reference>
<feature type="chain" id="PRO_0000324462" description="Stress response protein NST1">
    <location>
        <begin position="1"/>
        <end position="889"/>
    </location>
</feature>
<feature type="region of interest" description="Disordered" evidence="3">
    <location>
        <begin position="31"/>
        <end position="51"/>
    </location>
</feature>
<feature type="region of interest" description="Disordered" evidence="3">
    <location>
        <begin position="197"/>
        <end position="255"/>
    </location>
</feature>
<feature type="region of interest" description="Disordered" evidence="3">
    <location>
        <begin position="291"/>
        <end position="339"/>
    </location>
</feature>
<feature type="region of interest" description="Disordered" evidence="3">
    <location>
        <begin position="380"/>
        <end position="610"/>
    </location>
</feature>
<feature type="region of interest" description="Disordered" evidence="3">
    <location>
        <begin position="648"/>
        <end position="701"/>
    </location>
</feature>
<feature type="coiled-coil region" evidence="2">
    <location>
        <begin position="363"/>
        <end position="581"/>
    </location>
</feature>
<feature type="compositionally biased region" description="Basic residues" evidence="3">
    <location>
        <begin position="39"/>
        <end position="49"/>
    </location>
</feature>
<feature type="compositionally biased region" description="Polar residues" evidence="3">
    <location>
        <begin position="201"/>
        <end position="215"/>
    </location>
</feature>
<feature type="compositionally biased region" description="Low complexity" evidence="3">
    <location>
        <begin position="218"/>
        <end position="229"/>
    </location>
</feature>
<feature type="compositionally biased region" description="Acidic residues" evidence="3">
    <location>
        <begin position="236"/>
        <end position="255"/>
    </location>
</feature>
<feature type="compositionally biased region" description="Acidic residues" evidence="3">
    <location>
        <begin position="295"/>
        <end position="320"/>
    </location>
</feature>
<feature type="compositionally biased region" description="Basic and acidic residues" evidence="3">
    <location>
        <begin position="380"/>
        <end position="396"/>
    </location>
</feature>
<feature type="compositionally biased region" description="Basic residues" evidence="3">
    <location>
        <begin position="397"/>
        <end position="408"/>
    </location>
</feature>
<feature type="compositionally biased region" description="Basic and acidic residues" evidence="3">
    <location>
        <begin position="409"/>
        <end position="577"/>
    </location>
</feature>
<feature type="compositionally biased region" description="Polar residues" evidence="3">
    <location>
        <begin position="593"/>
        <end position="604"/>
    </location>
</feature>
<feature type="compositionally biased region" description="Polar residues" evidence="3">
    <location>
        <begin position="663"/>
        <end position="672"/>
    </location>
</feature>
<evidence type="ECO:0000250" key="1"/>
<evidence type="ECO:0000255" key="2"/>
<evidence type="ECO:0000256" key="3">
    <source>
        <dbReference type="SAM" id="MobiDB-lite"/>
    </source>
</evidence>
<evidence type="ECO:0000305" key="4"/>